<feature type="chain" id="PRO_0000154758" description="Large ribosomal subunit protein uL10">
    <location>
        <begin position="1"/>
        <end position="317"/>
    </location>
</feature>
<feature type="region of interest" description="Disordered" evidence="2">
    <location>
        <begin position="294"/>
        <end position="317"/>
    </location>
</feature>
<feature type="compositionally biased region" description="Acidic residues" evidence="2">
    <location>
        <begin position="302"/>
        <end position="311"/>
    </location>
</feature>
<feature type="modified residue" description="Phosphotyrosine" evidence="1">
    <location>
        <position position="24"/>
    </location>
</feature>
<feature type="modified residue" description="Phosphothreonine" evidence="12">
    <location>
        <position position="59"/>
    </location>
</feature>
<feature type="modified residue" description="Phosphoserine" evidence="11">
    <location>
        <position position="304"/>
    </location>
</feature>
<feature type="modified residue" description="Phosphoserine" evidence="11">
    <location>
        <position position="307"/>
    </location>
</feature>
<feature type="cross-link" description="Glycyl lysine isopeptide (Lys-Gly) (interchain with G-Cter in ubiquitin)" evidence="7">
    <location>
        <position position="264"/>
    </location>
</feature>
<feature type="cross-link" description="Glycyl lysine isopeptide (Lys-Gly) (interchain with G-Cter in SUMO1); alternate" evidence="13">
    <location>
        <position position="297"/>
    </location>
</feature>
<feature type="cross-link" description="Glycyl lysine isopeptide (Lys-Gly) (interchain with G-Cter in SUMO2); alternate" evidence="13">
    <location>
        <position position="297"/>
    </location>
</feature>
<feature type="splice variant" id="VSP_055867" description="In isoform 2." evidence="8">
    <location>
        <begin position="156"/>
        <end position="217"/>
    </location>
</feature>
<feature type="sequence conflict" description="In Ref. 3; AAH01127." evidence="10" ref="3">
    <original>K</original>
    <variation>E</variation>
    <location>
        <position position="246"/>
    </location>
</feature>
<sequence>MPREDRATWKSNYFLKIIQLLDDYPKCFIVGADNVGSKQMQQIRMSLRGKAVVLMGKNTMMRKAIRGHLENNPALEKLLPHIRGNVGFVFTKEDLTEIRDMLLANKVPAAARAGAIAPCEVTVPAQNTGLGPEKTSFFQALGITTKISRGTIEILSDVQLIKTGDKVGASEATLLNMLNISPFSFGLVIQQVFDNGSIYNPEVLDITEETLHSRFLEGVRNVASVCLQIGYPTVASVPHSIINGYKRVLALSVETDYTFPLAEKVKAFLADPSAFVAAAPVAAATTAAPAAAAAPAKVEAKEESEESDEDMGFGLFD</sequence>
<reference key="1">
    <citation type="journal article" date="1987" name="Mol. Cell. Biol.">
        <title>Human acidic ribosomal phosphoproteins P0, P1, and P2: analysis of cDNA clones, in vitro synthesis, and assembly.</title>
        <authorList>
            <person name="Rich B.E."/>
            <person name="Steitz J.A."/>
        </authorList>
    </citation>
    <scope>NUCLEOTIDE SEQUENCE [MRNA] (ISOFORM 1)</scope>
    <scope>SUBUNIT</scope>
</reference>
<reference key="2">
    <citation type="journal article" date="2006" name="Nature">
        <title>The finished DNA sequence of human chromosome 12.</title>
        <authorList>
            <person name="Scherer S.E."/>
            <person name="Muzny D.M."/>
            <person name="Buhay C.J."/>
            <person name="Chen R."/>
            <person name="Cree A."/>
            <person name="Ding Y."/>
            <person name="Dugan-Rocha S."/>
            <person name="Gill R."/>
            <person name="Gunaratne P."/>
            <person name="Harris R.A."/>
            <person name="Hawes A.C."/>
            <person name="Hernandez J."/>
            <person name="Hodgson A.V."/>
            <person name="Hume J."/>
            <person name="Jackson A."/>
            <person name="Khan Z.M."/>
            <person name="Kovar-Smith C."/>
            <person name="Lewis L.R."/>
            <person name="Lozado R.J."/>
            <person name="Metzker M.L."/>
            <person name="Milosavljevic A."/>
            <person name="Miner G.R."/>
            <person name="Montgomery K.T."/>
            <person name="Morgan M.B."/>
            <person name="Nazareth L.V."/>
            <person name="Scott G."/>
            <person name="Sodergren E."/>
            <person name="Song X.-Z."/>
            <person name="Steffen D."/>
            <person name="Lovering R.C."/>
            <person name="Wheeler D.A."/>
            <person name="Worley K.C."/>
            <person name="Yuan Y."/>
            <person name="Zhang Z."/>
            <person name="Adams C.Q."/>
            <person name="Ansari-Lari M.A."/>
            <person name="Ayele M."/>
            <person name="Brown M.J."/>
            <person name="Chen G."/>
            <person name="Chen Z."/>
            <person name="Clerc-Blankenburg K.P."/>
            <person name="Davis C."/>
            <person name="Delgado O."/>
            <person name="Dinh H.H."/>
            <person name="Draper H."/>
            <person name="Gonzalez-Garay M.L."/>
            <person name="Havlak P."/>
            <person name="Jackson L.R."/>
            <person name="Jacob L.S."/>
            <person name="Kelly S.H."/>
            <person name="Li L."/>
            <person name="Li Z."/>
            <person name="Liu J."/>
            <person name="Liu W."/>
            <person name="Lu J."/>
            <person name="Maheshwari M."/>
            <person name="Nguyen B.-V."/>
            <person name="Okwuonu G.O."/>
            <person name="Pasternak S."/>
            <person name="Perez L.M."/>
            <person name="Plopper F.J.H."/>
            <person name="Santibanez J."/>
            <person name="Shen H."/>
            <person name="Tabor P.E."/>
            <person name="Verduzco D."/>
            <person name="Waldron L."/>
            <person name="Wang Q."/>
            <person name="Williams G.A."/>
            <person name="Zhang J."/>
            <person name="Zhou J."/>
            <person name="Allen C.C."/>
            <person name="Amin A.G."/>
            <person name="Anyalebechi V."/>
            <person name="Bailey M."/>
            <person name="Barbaria J.A."/>
            <person name="Bimage K.E."/>
            <person name="Bryant N.P."/>
            <person name="Burch P.E."/>
            <person name="Burkett C.E."/>
            <person name="Burrell K.L."/>
            <person name="Calderon E."/>
            <person name="Cardenas V."/>
            <person name="Carter K."/>
            <person name="Casias K."/>
            <person name="Cavazos I."/>
            <person name="Cavazos S.R."/>
            <person name="Ceasar H."/>
            <person name="Chacko J."/>
            <person name="Chan S.N."/>
            <person name="Chavez D."/>
            <person name="Christopoulos C."/>
            <person name="Chu J."/>
            <person name="Cockrell R."/>
            <person name="Cox C.D."/>
            <person name="Dang M."/>
            <person name="Dathorne S.R."/>
            <person name="David R."/>
            <person name="Davis C.M."/>
            <person name="Davy-Carroll L."/>
            <person name="Deshazo D.R."/>
            <person name="Donlin J.E."/>
            <person name="D'Souza L."/>
            <person name="Eaves K.A."/>
            <person name="Egan A."/>
            <person name="Emery-Cohen A.J."/>
            <person name="Escotto M."/>
            <person name="Flagg N."/>
            <person name="Forbes L.D."/>
            <person name="Gabisi A.M."/>
            <person name="Garza M."/>
            <person name="Hamilton C."/>
            <person name="Henderson N."/>
            <person name="Hernandez O."/>
            <person name="Hines S."/>
            <person name="Hogues M.E."/>
            <person name="Huang M."/>
            <person name="Idlebird D.G."/>
            <person name="Johnson R."/>
            <person name="Jolivet A."/>
            <person name="Jones S."/>
            <person name="Kagan R."/>
            <person name="King L.M."/>
            <person name="Leal B."/>
            <person name="Lebow H."/>
            <person name="Lee S."/>
            <person name="LeVan J.M."/>
            <person name="Lewis L.C."/>
            <person name="London P."/>
            <person name="Lorensuhewa L.M."/>
            <person name="Loulseged H."/>
            <person name="Lovett D.A."/>
            <person name="Lucier A."/>
            <person name="Lucier R.L."/>
            <person name="Ma J."/>
            <person name="Madu R.C."/>
            <person name="Mapua P."/>
            <person name="Martindale A.D."/>
            <person name="Martinez E."/>
            <person name="Massey E."/>
            <person name="Mawhiney S."/>
            <person name="Meador M.G."/>
            <person name="Mendez S."/>
            <person name="Mercado C."/>
            <person name="Mercado I.C."/>
            <person name="Merritt C.E."/>
            <person name="Miner Z.L."/>
            <person name="Minja E."/>
            <person name="Mitchell T."/>
            <person name="Mohabbat F."/>
            <person name="Mohabbat K."/>
            <person name="Montgomery B."/>
            <person name="Moore N."/>
            <person name="Morris S."/>
            <person name="Munidasa M."/>
            <person name="Ngo R.N."/>
            <person name="Nguyen N.B."/>
            <person name="Nickerson E."/>
            <person name="Nwaokelemeh O.O."/>
            <person name="Nwokenkwo S."/>
            <person name="Obregon M."/>
            <person name="Oguh M."/>
            <person name="Oragunye N."/>
            <person name="Oviedo R.J."/>
            <person name="Parish B.J."/>
            <person name="Parker D.N."/>
            <person name="Parrish J."/>
            <person name="Parks K.L."/>
            <person name="Paul H.A."/>
            <person name="Payton B.A."/>
            <person name="Perez A."/>
            <person name="Perrin W."/>
            <person name="Pickens A."/>
            <person name="Primus E.L."/>
            <person name="Pu L.-L."/>
            <person name="Puazo M."/>
            <person name="Quiles M.M."/>
            <person name="Quiroz J.B."/>
            <person name="Rabata D."/>
            <person name="Reeves K."/>
            <person name="Ruiz S.J."/>
            <person name="Shao H."/>
            <person name="Sisson I."/>
            <person name="Sonaike T."/>
            <person name="Sorelle R.P."/>
            <person name="Sutton A.E."/>
            <person name="Svatek A.F."/>
            <person name="Svetz L.A."/>
            <person name="Tamerisa K.S."/>
            <person name="Taylor T.R."/>
            <person name="Teague B."/>
            <person name="Thomas N."/>
            <person name="Thorn R.D."/>
            <person name="Trejos Z.Y."/>
            <person name="Trevino B.K."/>
            <person name="Ukegbu O.N."/>
            <person name="Urban J.B."/>
            <person name="Vasquez L.I."/>
            <person name="Vera V.A."/>
            <person name="Villasana D.M."/>
            <person name="Wang L."/>
            <person name="Ward-Moore S."/>
            <person name="Warren J.T."/>
            <person name="Wei X."/>
            <person name="White F."/>
            <person name="Williamson A.L."/>
            <person name="Wleczyk R."/>
            <person name="Wooden H.S."/>
            <person name="Wooden S.H."/>
            <person name="Yen J."/>
            <person name="Yoon L."/>
            <person name="Yoon V."/>
            <person name="Zorrilla S.E."/>
            <person name="Nelson D."/>
            <person name="Kucherlapati R."/>
            <person name="Weinstock G."/>
            <person name="Gibbs R.A."/>
        </authorList>
    </citation>
    <scope>NUCLEOTIDE SEQUENCE [LARGE SCALE GENOMIC DNA]</scope>
</reference>
<reference key="3">
    <citation type="journal article" date="2004" name="Genome Res.">
        <title>The status, quality, and expansion of the NIH full-length cDNA project: the Mammalian Gene Collection (MGC).</title>
        <authorList>
            <consortium name="The MGC Project Team"/>
        </authorList>
    </citation>
    <scope>NUCLEOTIDE SEQUENCE [LARGE SCALE MRNA] (ISOFORMS 1 AND 2)</scope>
    <source>
        <tissue>Brain</tissue>
        <tissue>Cervix</tissue>
        <tissue>Colon</tissue>
        <tissue>Lung</tissue>
        <tissue>Lymph</tissue>
        <tissue>Muscle</tissue>
        <tissue>Pancreas</tissue>
    </source>
</reference>
<reference key="4">
    <citation type="submission" date="2008-12" db="UniProtKB">
        <authorList>
            <person name="Lubec G."/>
            <person name="Chen W.-Q."/>
            <person name="Sun Y."/>
        </authorList>
    </citation>
    <scope>PROTEIN SEQUENCE OF 17-38; 84-92; 135-146; 150-162; 248-264 AND 267-297</scope>
    <scope>IDENTIFICATION BY MASS SPECTROMETRY</scope>
    <source>
        <tissue>Fetal brain cortex</tissue>
    </source>
</reference>
<reference key="5">
    <citation type="journal article" date="1998" name="Genome Res.">
        <title>A map of 75 human ribosomal protein genes.</title>
        <authorList>
            <person name="Kenmochi N."/>
            <person name="Kawaguchi T."/>
            <person name="Rozen S."/>
            <person name="Davis E."/>
            <person name="Goodman N."/>
            <person name="Hudson T.J."/>
            <person name="Tanaka T."/>
            <person name="Page D.C."/>
        </authorList>
    </citation>
    <scope>NUCLEOTIDE SEQUENCE [GENOMIC DNA] OF 218-310</scope>
</reference>
<reference key="6">
    <citation type="journal article" date="2007" name="Mol. Cell. Proteomics">
        <title>Molecular composition of IMP1 ribonucleoprotein granules.</title>
        <authorList>
            <person name="Joeson L."/>
            <person name="Vikesaa J."/>
            <person name="Krogh A."/>
            <person name="Nielsen L.K."/>
            <person name="Hansen T."/>
            <person name="Borup R."/>
            <person name="Johnsen A.H."/>
            <person name="Christiansen J."/>
            <person name="Nielsen F.C."/>
        </authorList>
    </citation>
    <scope>IDENTIFICATION IN A MRNP GRANULE COMPLEX</scope>
    <scope>IDENTIFICATION BY MASS SPECTROMETRY</scope>
    <scope>SUBCELLULAR LOCATION</scope>
</reference>
<reference key="7">
    <citation type="journal article" date="2009" name="Mol. Cell. Biol.">
        <title>APE1/Ref-1 interacts with NPM1 within nucleoli and plays a role in the rRNA quality control process.</title>
        <authorList>
            <person name="Vascotto C."/>
            <person name="Fantini D."/>
            <person name="Romanello M."/>
            <person name="Cesaratto L."/>
            <person name="Deganuto M."/>
            <person name="Leonardi A."/>
            <person name="Radicella J.P."/>
            <person name="Kelley M.R."/>
            <person name="D'Ambrosio C."/>
            <person name="Scaloni A."/>
            <person name="Quadrifoglio F."/>
            <person name="Tell G."/>
        </authorList>
    </citation>
    <scope>INTERACTION WITH APEX1</scope>
    <scope>IDENTIFICATION BY MASS SPECTROMETRY</scope>
    <scope>SUBCELLULAR LOCATION</scope>
</reference>
<reference key="8">
    <citation type="journal article" date="2009" name="Mol. Cell. Proteomics">
        <title>Large-scale proteomics analysis of the human kinome.</title>
        <authorList>
            <person name="Oppermann F.S."/>
            <person name="Gnad F."/>
            <person name="Olsen J.V."/>
            <person name="Hornberger R."/>
            <person name="Greff Z."/>
            <person name="Keri G."/>
            <person name="Mann M."/>
            <person name="Daub H."/>
        </authorList>
    </citation>
    <scope>PHOSPHORYLATION [LARGE SCALE ANALYSIS] AT SER-304 AND SER-307</scope>
    <scope>IDENTIFICATION BY MASS SPECTROMETRY [LARGE SCALE ANALYSIS]</scope>
</reference>
<reference key="9">
    <citation type="journal article" date="2010" name="Sci. Signal.">
        <title>Quantitative phosphoproteomics reveals widespread full phosphorylation site occupancy during mitosis.</title>
        <authorList>
            <person name="Olsen J.V."/>
            <person name="Vermeulen M."/>
            <person name="Santamaria A."/>
            <person name="Kumar C."/>
            <person name="Miller M.L."/>
            <person name="Jensen L.J."/>
            <person name="Gnad F."/>
            <person name="Cox J."/>
            <person name="Jensen T.S."/>
            <person name="Nigg E.A."/>
            <person name="Brunak S."/>
            <person name="Mann M."/>
        </authorList>
    </citation>
    <scope>IDENTIFICATION BY MASS SPECTROMETRY [LARGE SCALE ANALYSIS]</scope>
    <source>
        <tissue>Cervix carcinoma</tissue>
    </source>
</reference>
<reference key="10">
    <citation type="journal article" date="2011" name="BMC Syst. Biol.">
        <title>Initial characterization of the human central proteome.</title>
        <authorList>
            <person name="Burkard T.R."/>
            <person name="Planyavsky M."/>
            <person name="Kaupe I."/>
            <person name="Breitwieser F.P."/>
            <person name="Buerckstuemmer T."/>
            <person name="Bennett K.L."/>
            <person name="Superti-Furga G."/>
            <person name="Colinge J."/>
        </authorList>
    </citation>
    <scope>IDENTIFICATION BY MASS SPECTROMETRY [LARGE SCALE ANALYSIS]</scope>
</reference>
<reference key="11">
    <citation type="journal article" date="2013" name="J. Proteome Res.">
        <title>Toward a comprehensive characterization of a human cancer cell phosphoproteome.</title>
        <authorList>
            <person name="Zhou H."/>
            <person name="Di Palma S."/>
            <person name="Preisinger C."/>
            <person name="Peng M."/>
            <person name="Polat A.N."/>
            <person name="Heck A.J."/>
            <person name="Mohammed S."/>
        </authorList>
    </citation>
    <scope>PHOSPHORYLATION [LARGE SCALE ANALYSIS] AT THR-59</scope>
    <scope>IDENTIFICATION BY MASS SPECTROMETRY [LARGE SCALE ANALYSIS]</scope>
    <source>
        <tissue>Erythroleukemia</tissue>
    </source>
</reference>
<reference key="12">
    <citation type="journal article" date="2014" name="Curr. Opin. Struct. Biol.">
        <title>A new system for naming ribosomal proteins.</title>
        <authorList>
            <person name="Ban N."/>
            <person name="Beckmann R."/>
            <person name="Cate J.H.D."/>
            <person name="Dinman J.D."/>
            <person name="Dragon F."/>
            <person name="Ellis S.R."/>
            <person name="Lafontaine D.L.J."/>
            <person name="Lindahl L."/>
            <person name="Liljas A."/>
            <person name="Lipton J.M."/>
            <person name="McAlear M.A."/>
            <person name="Moore P.B."/>
            <person name="Noller H.F."/>
            <person name="Ortega J."/>
            <person name="Panse V.G."/>
            <person name="Ramakrishnan V."/>
            <person name="Spahn C.M.T."/>
            <person name="Steitz T.A."/>
            <person name="Tchorzewski M."/>
            <person name="Tollervey D."/>
            <person name="Warren A.J."/>
            <person name="Williamson J.R."/>
            <person name="Wilson D."/>
            <person name="Yonath A."/>
            <person name="Yusupov M."/>
        </authorList>
    </citation>
    <scope>NOMENCLATURE</scope>
</reference>
<reference key="13">
    <citation type="journal article" date="2014" name="PLoS ONE">
        <title>Subcellular fractionation and localization studies reveal a direct interaction of the fragile X mental retardation protein (FMRP) with nucleolin.</title>
        <authorList>
            <person name="Taha M.S."/>
            <person name="Nouri K."/>
            <person name="Milroy L.G."/>
            <person name="Moll J.M."/>
            <person name="Herrmann C."/>
            <person name="Brunsveld L."/>
            <person name="Piekorz R.P."/>
            <person name="Ahmadian M.R."/>
        </authorList>
    </citation>
    <scope>INTERACTION WITH FMR1</scope>
</reference>
<reference key="14">
    <citation type="journal article" date="2014" name="Proc. Natl. Acad. Sci. U.S.A.">
        <title>Mapping of SUMO sites and analysis of SUMOylation changes induced by external stimuli.</title>
        <authorList>
            <person name="Impens F."/>
            <person name="Radoshevich L."/>
            <person name="Cossart P."/>
            <person name="Ribet D."/>
        </authorList>
    </citation>
    <scope>SUMOYLATION [LARGE SCALE ANALYSIS] AT LYS-297</scope>
    <scope>IDENTIFICATION BY MASS SPECTROMETRY [LARGE SCALE ANALYSIS]</scope>
</reference>
<reference key="15">
    <citation type="journal article" date="2015" name="Proteomics">
        <title>N-terminome analysis of the human mitochondrial proteome.</title>
        <authorList>
            <person name="Vaca Jacome A.S."/>
            <person name="Rabilloud T."/>
            <person name="Schaeffer-Reiss C."/>
            <person name="Rompais M."/>
            <person name="Ayoub D."/>
            <person name="Lane L."/>
            <person name="Bairoch A."/>
            <person name="Van Dorsselaer A."/>
            <person name="Carapito C."/>
        </authorList>
    </citation>
    <scope>IDENTIFICATION BY MASS SPECTROMETRY [LARGE SCALE ANALYSIS]</scope>
</reference>
<reference key="16">
    <citation type="journal article" date="2023" name="Cell">
        <title>An E3 ligase network engages GCN1 to promote the degradation of translation factors on stalled ribosomes.</title>
        <authorList>
            <person name="Oltion K."/>
            <person name="Carelli J.D."/>
            <person name="Yang T."/>
            <person name="See S.K."/>
            <person name="Wang H.Y."/>
            <person name="Kampmann M."/>
            <person name="Taunton J."/>
        </authorList>
    </citation>
    <scope>UBIQUITINATION AT LYS-264</scope>
</reference>
<reference key="17">
    <citation type="journal article" date="2013" name="Nature">
        <title>Structures of the human and Drosophila 80S ribosome.</title>
        <authorList>
            <person name="Anger A.M."/>
            <person name="Armache J.P."/>
            <person name="Berninghausen O."/>
            <person name="Habeck M."/>
            <person name="Subklewe M."/>
            <person name="Wilson D.N."/>
            <person name="Beckmann R."/>
        </authorList>
    </citation>
    <scope>STRUCTURE BY ELECTRON MICROSCOPY (5.0 ANGSTROMS)</scope>
</reference>
<proteinExistence type="evidence at protein level"/>
<dbReference type="EMBL" id="M17885">
    <property type="protein sequence ID" value="AAA36470.1"/>
    <property type="molecule type" value="mRNA"/>
</dbReference>
<dbReference type="EMBL" id="AC004263">
    <property type="protein sequence ID" value="AAC05176.1"/>
    <property type="molecule type" value="Genomic_DNA"/>
</dbReference>
<dbReference type="EMBL" id="BC000087">
    <property type="protein sequence ID" value="AAH00087.1"/>
    <property type="molecule type" value="mRNA"/>
</dbReference>
<dbReference type="EMBL" id="BC000345">
    <property type="protein sequence ID" value="AAH00345.1"/>
    <property type="molecule type" value="mRNA"/>
</dbReference>
<dbReference type="EMBL" id="BC000752">
    <property type="protein sequence ID" value="AAH00752.1"/>
    <property type="molecule type" value="mRNA"/>
</dbReference>
<dbReference type="EMBL" id="BC001127">
    <property type="protein sequence ID" value="AAH01127.1"/>
    <property type="molecule type" value="mRNA"/>
</dbReference>
<dbReference type="EMBL" id="BC001834">
    <property type="protein sequence ID" value="AAH01834.1"/>
    <property type="molecule type" value="mRNA"/>
</dbReference>
<dbReference type="EMBL" id="BC003655">
    <property type="protein sequence ID" value="AAH03655.1"/>
    <property type="molecule type" value="mRNA"/>
</dbReference>
<dbReference type="EMBL" id="BC005863">
    <property type="protein sequence ID" value="AAH05863.1"/>
    <property type="molecule type" value="mRNA"/>
</dbReference>
<dbReference type="EMBL" id="BC008092">
    <property type="protein sequence ID" value="AAH08092.1"/>
    <property type="molecule type" value="mRNA"/>
</dbReference>
<dbReference type="EMBL" id="BC008594">
    <property type="protein sequence ID" value="AAH08594.1"/>
    <property type="molecule type" value="mRNA"/>
</dbReference>
<dbReference type="EMBL" id="BC009867">
    <property type="protein sequence ID" value="AAH09867.1"/>
    <property type="molecule type" value="mRNA"/>
</dbReference>
<dbReference type="EMBL" id="BC015173">
    <property type="protein sequence ID" value="AAH15173.1"/>
    <property type="molecule type" value="mRNA"/>
</dbReference>
<dbReference type="EMBL" id="BC015690">
    <property type="protein sequence ID" value="AAH15690.1"/>
    <property type="molecule type" value="mRNA"/>
</dbReference>
<dbReference type="EMBL" id="BC107717">
    <property type="protein sequence ID" value="AAI07718.1"/>
    <property type="molecule type" value="mRNA"/>
</dbReference>
<dbReference type="EMBL" id="AB007187">
    <property type="protein sequence ID" value="BAA25845.1"/>
    <property type="molecule type" value="Genomic_DNA"/>
</dbReference>
<dbReference type="CCDS" id="CCDS9193.1">
    <molecule id="P05388-1"/>
</dbReference>
<dbReference type="PIR" id="A27125">
    <property type="entry name" value="R5HUP0"/>
</dbReference>
<dbReference type="RefSeq" id="NP_000993.1">
    <molecule id="P05388-1"/>
    <property type="nucleotide sequence ID" value="NM_001002.4"/>
</dbReference>
<dbReference type="RefSeq" id="NP_444505.1">
    <molecule id="P05388-1"/>
    <property type="nucleotide sequence ID" value="NM_053275.4"/>
</dbReference>
<dbReference type="PDB" id="4V6W">
    <property type="method" value="EM"/>
    <property type="resolution" value="6.00 A"/>
    <property type="chains" value="q=5-227"/>
</dbReference>
<dbReference type="PDB" id="4V6X">
    <property type="method" value="EM"/>
    <property type="resolution" value="5.00 A"/>
    <property type="chains" value="Cq=1-317"/>
</dbReference>
<dbReference type="PDB" id="5AJ0">
    <property type="method" value="EM"/>
    <property type="resolution" value="3.50 A"/>
    <property type="chains" value="AK=1-317"/>
</dbReference>
<dbReference type="PDB" id="6OLG">
    <property type="method" value="EM"/>
    <property type="resolution" value="3.40 A"/>
    <property type="chains" value="AK=1-109"/>
</dbReference>
<dbReference type="PDB" id="6ZM7">
    <property type="method" value="EM"/>
    <property type="resolution" value="2.70 A"/>
    <property type="chains" value="Ls=1-317"/>
</dbReference>
<dbReference type="PDB" id="6ZME">
    <property type="method" value="EM"/>
    <property type="resolution" value="3.00 A"/>
    <property type="chains" value="Ls=1-317"/>
</dbReference>
<dbReference type="PDB" id="6ZMI">
    <property type="method" value="EM"/>
    <property type="resolution" value="2.60 A"/>
    <property type="chains" value="Ls=1-317"/>
</dbReference>
<dbReference type="PDB" id="6ZMO">
    <property type="method" value="EM"/>
    <property type="resolution" value="3.10 A"/>
    <property type="chains" value="Ls=1-317"/>
</dbReference>
<dbReference type="PDB" id="8G5Z">
    <property type="method" value="EM"/>
    <property type="resolution" value="2.64 A"/>
    <property type="chains" value="Lq=5-200"/>
</dbReference>
<dbReference type="PDB" id="8G60">
    <property type="method" value="EM"/>
    <property type="resolution" value="2.54 A"/>
    <property type="chains" value="Lq=1-317"/>
</dbReference>
<dbReference type="PDB" id="8G6J">
    <property type="method" value="EM"/>
    <property type="resolution" value="2.80 A"/>
    <property type="chains" value="Lq=1-317"/>
</dbReference>
<dbReference type="PDB" id="8K2C">
    <property type="method" value="EM"/>
    <property type="resolution" value="2.40 A"/>
    <property type="chains" value="Ls=1-317"/>
</dbReference>
<dbReference type="PDB" id="8UKB">
    <property type="method" value="EM"/>
    <property type="resolution" value="3.05 A"/>
    <property type="chains" value="Ls=5-200"/>
</dbReference>
<dbReference type="PDB" id="8XSX">
    <property type="method" value="EM"/>
    <property type="resolution" value="2.40 A"/>
    <property type="chains" value="Ls=1-317"/>
</dbReference>
<dbReference type="PDB" id="8XSY">
    <property type="method" value="EM"/>
    <property type="resolution" value="3.00 A"/>
    <property type="chains" value="Ls=1-317"/>
</dbReference>
<dbReference type="PDB" id="8XSZ">
    <property type="method" value="EM"/>
    <property type="resolution" value="3.20 A"/>
    <property type="chains" value="Ls=1-317"/>
</dbReference>
<dbReference type="PDB" id="8YOO">
    <property type="method" value="EM"/>
    <property type="resolution" value="2.00 A"/>
    <property type="chains" value="Ls=1-317"/>
</dbReference>
<dbReference type="PDB" id="8YOP">
    <property type="method" value="EM"/>
    <property type="resolution" value="2.20 A"/>
    <property type="chains" value="Ls=1-317"/>
</dbReference>
<dbReference type="PDBsum" id="4V6W"/>
<dbReference type="PDBsum" id="4V6X"/>
<dbReference type="PDBsum" id="5AJ0"/>
<dbReference type="PDBsum" id="6OLG"/>
<dbReference type="PDBsum" id="6ZM7"/>
<dbReference type="PDBsum" id="6ZME"/>
<dbReference type="PDBsum" id="6ZMI"/>
<dbReference type="PDBsum" id="6ZMO"/>
<dbReference type="PDBsum" id="8G5Z"/>
<dbReference type="PDBsum" id="8G60"/>
<dbReference type="PDBsum" id="8G6J"/>
<dbReference type="PDBsum" id="8K2C"/>
<dbReference type="PDBsum" id="8UKB"/>
<dbReference type="PDBsum" id="8XSX"/>
<dbReference type="PDBsum" id="8XSY"/>
<dbReference type="PDBsum" id="8XSZ"/>
<dbReference type="PDBsum" id="8YOO"/>
<dbReference type="PDBsum" id="8YOP"/>
<dbReference type="EMDB" id="EMD-11288"/>
<dbReference type="EMDB" id="EMD-11289"/>
<dbReference type="EMDB" id="EMD-11292"/>
<dbReference type="EMDB" id="EMD-11299"/>
<dbReference type="EMDB" id="EMD-29758"/>
<dbReference type="EMDB" id="EMD-29759"/>
<dbReference type="EMDB" id="EMD-29771"/>
<dbReference type="EMDB" id="EMD-36838"/>
<dbReference type="EMDB" id="EMD-38629"/>
<dbReference type="EMDB" id="EMD-38630"/>
<dbReference type="EMDB" id="EMD-38631"/>
<dbReference type="EMDB" id="EMD-39455"/>
<dbReference type="EMDB" id="EMD-39456"/>
<dbReference type="EMDB" id="EMD-42351"/>
<dbReference type="SMR" id="P05388"/>
<dbReference type="BioGRID" id="112094">
    <property type="interactions" value="682"/>
</dbReference>
<dbReference type="ComplexPortal" id="CPX-5183">
    <property type="entry name" value="60S cytosolic large ribosomal subunit"/>
</dbReference>
<dbReference type="ComplexPortal" id="CPX-7664">
    <property type="entry name" value="60S cytosolic large ribosomal subunit, testis-specific variant"/>
</dbReference>
<dbReference type="ComplexPortal" id="CPX-7665">
    <property type="entry name" value="60S cytosolic large ribosomal subunit, striated muscle variant"/>
</dbReference>
<dbReference type="CORUM" id="P05388"/>
<dbReference type="FunCoup" id="P05388">
    <property type="interactions" value="1754"/>
</dbReference>
<dbReference type="IntAct" id="P05388">
    <property type="interactions" value="385"/>
</dbReference>
<dbReference type="MINT" id="P05388"/>
<dbReference type="STRING" id="9606.ENSP00000449328"/>
<dbReference type="GlyGen" id="P05388">
    <property type="glycosylation" value="3 sites, 1 O-linked glycan (3 sites)"/>
</dbReference>
<dbReference type="iPTMnet" id="P05388"/>
<dbReference type="MetOSite" id="P05388"/>
<dbReference type="PhosphoSitePlus" id="P05388"/>
<dbReference type="SwissPalm" id="P05388"/>
<dbReference type="BioMuta" id="RPLP0"/>
<dbReference type="DMDM" id="133041"/>
<dbReference type="REPRODUCTION-2DPAGE" id="P05388"/>
<dbReference type="jPOST" id="P05388"/>
<dbReference type="MassIVE" id="P05388"/>
<dbReference type="PaxDb" id="9606-ENSP00000449328"/>
<dbReference type="PeptideAtlas" id="P05388"/>
<dbReference type="PRIDE" id="P05388"/>
<dbReference type="ProteomicsDB" id="51833">
    <molecule id="P05388-1"/>
</dbReference>
<dbReference type="ProteomicsDB" id="61651"/>
<dbReference type="Pumba" id="P05388"/>
<dbReference type="TopDownProteomics" id="P05388-1">
    <molecule id="P05388-1"/>
</dbReference>
<dbReference type="Antibodypedia" id="1255">
    <property type="antibodies" value="298 antibodies from 30 providers"/>
</dbReference>
<dbReference type="DNASU" id="6175"/>
<dbReference type="Ensembl" id="ENST00000228306.8">
    <molecule id="P05388-1"/>
    <property type="protein sequence ID" value="ENSP00000339027.3"/>
    <property type="gene ID" value="ENSG00000089157.16"/>
</dbReference>
<dbReference type="Ensembl" id="ENST00000313104.9">
    <molecule id="P05388-2"/>
    <property type="protein sequence ID" value="ENSP00000366471.4"/>
    <property type="gene ID" value="ENSG00000089157.16"/>
</dbReference>
<dbReference type="Ensembl" id="ENST00000392514.9">
    <molecule id="P05388-1"/>
    <property type="protein sequence ID" value="ENSP00000376299.4"/>
    <property type="gene ID" value="ENSG00000089157.16"/>
</dbReference>
<dbReference type="Ensembl" id="ENST00000551150.5">
    <molecule id="P05388-1"/>
    <property type="protein sequence ID" value="ENSP00000449328.1"/>
    <property type="gene ID" value="ENSG00000089157.16"/>
</dbReference>
<dbReference type="GeneID" id="6175"/>
<dbReference type="KEGG" id="hsa:6175"/>
<dbReference type="MANE-Select" id="ENST00000392514.9">
    <property type="protein sequence ID" value="ENSP00000376299.4"/>
    <property type="RefSeq nucleotide sequence ID" value="NM_001002.4"/>
    <property type="RefSeq protein sequence ID" value="NP_000993.1"/>
</dbReference>
<dbReference type="UCSC" id="uc001txp.4">
    <molecule id="P05388-1"/>
    <property type="organism name" value="human"/>
</dbReference>
<dbReference type="AGR" id="HGNC:10371"/>
<dbReference type="CTD" id="6175"/>
<dbReference type="DisGeNET" id="6175"/>
<dbReference type="GeneCards" id="RPLP0"/>
<dbReference type="HGNC" id="HGNC:10371">
    <property type="gene designation" value="RPLP0"/>
</dbReference>
<dbReference type="HPA" id="ENSG00000089157">
    <property type="expression patterns" value="Low tissue specificity"/>
</dbReference>
<dbReference type="MalaCards" id="RPLP0"/>
<dbReference type="MIM" id="180510">
    <property type="type" value="gene"/>
</dbReference>
<dbReference type="neXtProt" id="NX_P05388"/>
<dbReference type="OpenTargets" id="ENSG00000089157"/>
<dbReference type="PharmGKB" id="PA34772"/>
<dbReference type="VEuPathDB" id="HostDB:ENSG00000089157"/>
<dbReference type="eggNOG" id="KOG0815">
    <property type="taxonomic scope" value="Eukaryota"/>
</dbReference>
<dbReference type="GeneTree" id="ENSGT00390000017839"/>
<dbReference type="InParanoid" id="P05388"/>
<dbReference type="OMA" id="DMNPFKL"/>
<dbReference type="OrthoDB" id="10259902at2759"/>
<dbReference type="PAN-GO" id="P05388">
    <property type="GO annotations" value="5 GO annotations based on evolutionary models"/>
</dbReference>
<dbReference type="PhylomeDB" id="P05388"/>
<dbReference type="TreeFam" id="TF300849"/>
<dbReference type="PathwayCommons" id="P05388"/>
<dbReference type="Reactome" id="R-HSA-156827">
    <property type="pathway name" value="L13a-mediated translational silencing of Ceruloplasmin expression"/>
</dbReference>
<dbReference type="Reactome" id="R-HSA-156902">
    <property type="pathway name" value="Peptide chain elongation"/>
</dbReference>
<dbReference type="Reactome" id="R-HSA-1799339">
    <property type="pathway name" value="SRP-dependent cotranslational protein targeting to membrane"/>
</dbReference>
<dbReference type="Reactome" id="R-HSA-192823">
    <property type="pathway name" value="Viral mRNA Translation"/>
</dbReference>
<dbReference type="Reactome" id="R-HSA-2408557">
    <property type="pathway name" value="Selenocysteine synthesis"/>
</dbReference>
<dbReference type="Reactome" id="R-HSA-6791226">
    <property type="pathway name" value="Major pathway of rRNA processing in the nucleolus and cytosol"/>
</dbReference>
<dbReference type="Reactome" id="R-HSA-72689">
    <property type="pathway name" value="Formation of a pool of free 40S subunits"/>
</dbReference>
<dbReference type="Reactome" id="R-HSA-72706">
    <property type="pathway name" value="GTP hydrolysis and joining of the 60S ribosomal subunit"/>
</dbReference>
<dbReference type="Reactome" id="R-HSA-72764">
    <property type="pathway name" value="Eukaryotic Translation Termination"/>
</dbReference>
<dbReference type="Reactome" id="R-HSA-8950505">
    <property type="pathway name" value="Gene and protein expression by JAK-STAT signaling after Interleukin-12 stimulation"/>
</dbReference>
<dbReference type="Reactome" id="R-HSA-9010553">
    <property type="pathway name" value="Regulation of expression of SLITs and ROBOs"/>
</dbReference>
<dbReference type="Reactome" id="R-HSA-9633012">
    <property type="pathway name" value="Response of EIF2AK4 (GCN2) to amino acid deficiency"/>
</dbReference>
<dbReference type="Reactome" id="R-HSA-975956">
    <property type="pathway name" value="Nonsense Mediated Decay (NMD) independent of the Exon Junction Complex (EJC)"/>
</dbReference>
<dbReference type="Reactome" id="R-HSA-975957">
    <property type="pathway name" value="Nonsense Mediated Decay (NMD) enhanced by the Exon Junction Complex (EJC)"/>
</dbReference>
<dbReference type="SignaLink" id="P05388"/>
<dbReference type="SIGNOR" id="P05388"/>
<dbReference type="BioGRID-ORCS" id="6175">
    <property type="hits" value="840 hits in 1161 CRISPR screens"/>
</dbReference>
<dbReference type="CD-CODE" id="232F8A39">
    <property type="entry name" value="P-body"/>
</dbReference>
<dbReference type="CD-CODE" id="804901D1">
    <property type="entry name" value="Nuclear speckle"/>
</dbReference>
<dbReference type="CD-CODE" id="F85A2E29">
    <property type="entry name" value="IMP1 RNP granule"/>
</dbReference>
<dbReference type="CD-CODE" id="FB4E32DD">
    <property type="entry name" value="Presynaptic clusters and postsynaptic densities"/>
</dbReference>
<dbReference type="ChiTaRS" id="RPLP0">
    <property type="organism name" value="human"/>
</dbReference>
<dbReference type="GeneWiki" id="RPLP0"/>
<dbReference type="GenomeRNAi" id="6175"/>
<dbReference type="Pharos" id="P05388">
    <property type="development level" value="Tbio"/>
</dbReference>
<dbReference type="PRO" id="PR:P05388"/>
<dbReference type="Proteomes" id="UP000005640">
    <property type="component" value="Chromosome 12"/>
</dbReference>
<dbReference type="RNAct" id="P05388">
    <property type="molecule type" value="protein"/>
</dbReference>
<dbReference type="Bgee" id="ENSG00000089157">
    <property type="expression patterns" value="Expressed in primordial germ cell in gonad and 109 other cell types or tissues"/>
</dbReference>
<dbReference type="ExpressionAtlas" id="P05388">
    <property type="expression patterns" value="baseline and differential"/>
</dbReference>
<dbReference type="GO" id="GO:0005737">
    <property type="term" value="C:cytoplasm"/>
    <property type="evidence" value="ECO:0000314"/>
    <property type="project" value="UniProtKB"/>
</dbReference>
<dbReference type="GO" id="GO:0036464">
    <property type="term" value="C:cytoplasmic ribonucleoprotein granule"/>
    <property type="evidence" value="ECO:0000314"/>
    <property type="project" value="ParkinsonsUK-UCL"/>
</dbReference>
<dbReference type="GO" id="GO:0005829">
    <property type="term" value="C:cytosol"/>
    <property type="evidence" value="ECO:0000314"/>
    <property type="project" value="HPA"/>
</dbReference>
<dbReference type="GO" id="GO:0022625">
    <property type="term" value="C:cytosolic large ribosomal subunit"/>
    <property type="evidence" value="ECO:0000314"/>
    <property type="project" value="GO_Central"/>
</dbReference>
<dbReference type="GO" id="GO:0022626">
    <property type="term" value="C:cytosolic ribosome"/>
    <property type="evidence" value="ECO:0000314"/>
    <property type="project" value="FlyBase"/>
</dbReference>
<dbReference type="GO" id="GO:0005783">
    <property type="term" value="C:endoplasmic reticulum"/>
    <property type="evidence" value="ECO:0000314"/>
    <property type="project" value="HPA"/>
</dbReference>
<dbReference type="GO" id="GO:0070062">
    <property type="term" value="C:extracellular exosome"/>
    <property type="evidence" value="ECO:0007005"/>
    <property type="project" value="UniProtKB"/>
</dbReference>
<dbReference type="GO" id="GO:0005925">
    <property type="term" value="C:focal adhesion"/>
    <property type="evidence" value="ECO:0007005"/>
    <property type="project" value="UniProtKB"/>
</dbReference>
<dbReference type="GO" id="GO:0016020">
    <property type="term" value="C:membrane"/>
    <property type="evidence" value="ECO:0007005"/>
    <property type="project" value="UniProtKB"/>
</dbReference>
<dbReference type="GO" id="GO:0005634">
    <property type="term" value="C:nucleus"/>
    <property type="evidence" value="ECO:0000314"/>
    <property type="project" value="UniProtKB"/>
</dbReference>
<dbReference type="GO" id="GO:0098794">
    <property type="term" value="C:postsynapse"/>
    <property type="evidence" value="ECO:0000314"/>
    <property type="project" value="SynGO"/>
</dbReference>
<dbReference type="GO" id="GO:0014069">
    <property type="term" value="C:postsynaptic density"/>
    <property type="evidence" value="ECO:0000314"/>
    <property type="project" value="SynGO"/>
</dbReference>
<dbReference type="GO" id="GO:1990904">
    <property type="term" value="C:ribonucleoprotein complex"/>
    <property type="evidence" value="ECO:0000314"/>
    <property type="project" value="UniProtKB"/>
</dbReference>
<dbReference type="GO" id="GO:0070180">
    <property type="term" value="F:large ribosomal subunit rRNA binding"/>
    <property type="evidence" value="ECO:0000318"/>
    <property type="project" value="GO_Central"/>
</dbReference>
<dbReference type="GO" id="GO:0003723">
    <property type="term" value="F:RNA binding"/>
    <property type="evidence" value="ECO:0007005"/>
    <property type="project" value="UniProtKB"/>
</dbReference>
<dbReference type="GO" id="GO:0003735">
    <property type="term" value="F:structural constituent of ribosome"/>
    <property type="evidence" value="ECO:0000314"/>
    <property type="project" value="FlyBase"/>
</dbReference>
<dbReference type="GO" id="GO:0002181">
    <property type="term" value="P:cytoplasmic translation"/>
    <property type="evidence" value="ECO:0000318"/>
    <property type="project" value="GO_Central"/>
</dbReference>
<dbReference type="GO" id="GO:0042254">
    <property type="term" value="P:ribosome biogenesis"/>
    <property type="evidence" value="ECO:0007669"/>
    <property type="project" value="InterPro"/>
</dbReference>
<dbReference type="GO" id="GO:0006412">
    <property type="term" value="P:translation"/>
    <property type="evidence" value="ECO:0000303"/>
    <property type="project" value="UniProtKB"/>
</dbReference>
<dbReference type="CDD" id="cd05795">
    <property type="entry name" value="Ribosomal_P0_L10e"/>
    <property type="match status" value="1"/>
</dbReference>
<dbReference type="FunFam" id="3.30.70.1730:FF:000002">
    <property type="entry name" value="60S acidic ribosomal protein P0"/>
    <property type="match status" value="1"/>
</dbReference>
<dbReference type="FunFam" id="3.90.105.20:FF:000001">
    <property type="entry name" value="60S acidic ribosomal protein P0"/>
    <property type="match status" value="1"/>
</dbReference>
<dbReference type="Gene3D" id="3.30.70.1730">
    <property type="match status" value="1"/>
</dbReference>
<dbReference type="Gene3D" id="3.90.105.20">
    <property type="match status" value="1"/>
</dbReference>
<dbReference type="InterPro" id="IPR050323">
    <property type="entry name" value="Ribosomal_protein_uL10"/>
</dbReference>
<dbReference type="InterPro" id="IPR001790">
    <property type="entry name" value="Ribosomal_uL10"/>
</dbReference>
<dbReference type="InterPro" id="IPR040637">
    <property type="entry name" value="Ribosomal_uL10-like_insert"/>
</dbReference>
<dbReference type="InterPro" id="IPR043164">
    <property type="entry name" value="Ribosomal_uL10-like_insert_sf"/>
</dbReference>
<dbReference type="InterPro" id="IPR043141">
    <property type="entry name" value="Ribosomal_uL10-like_sf"/>
</dbReference>
<dbReference type="InterPro" id="IPR030670">
    <property type="entry name" value="uL10_eukaryotes"/>
</dbReference>
<dbReference type="PANTHER" id="PTHR45699">
    <property type="entry name" value="60S ACIDIC RIBOSOMAL PROTEIN P0"/>
    <property type="match status" value="1"/>
</dbReference>
<dbReference type="PANTHER" id="PTHR45699:SF1">
    <property type="entry name" value="LARGE RIBOSOMAL SUBUNIT PROTEIN UL10-RELATED"/>
    <property type="match status" value="1"/>
</dbReference>
<dbReference type="Pfam" id="PF00428">
    <property type="entry name" value="Ribosomal_60s"/>
    <property type="match status" value="1"/>
</dbReference>
<dbReference type="Pfam" id="PF00466">
    <property type="entry name" value="Ribosomal_L10"/>
    <property type="match status" value="1"/>
</dbReference>
<dbReference type="Pfam" id="PF17777">
    <property type="entry name" value="RL10P_insert"/>
    <property type="match status" value="1"/>
</dbReference>
<dbReference type="PIRSF" id="PIRSF039087">
    <property type="entry name" value="L10E"/>
    <property type="match status" value="1"/>
</dbReference>
<dbReference type="SUPFAM" id="SSF160369">
    <property type="entry name" value="Ribosomal protein L10-like"/>
    <property type="match status" value="1"/>
</dbReference>
<evidence type="ECO:0000250" key="1">
    <source>
        <dbReference type="UniProtKB" id="P14869"/>
    </source>
</evidence>
<evidence type="ECO:0000256" key="2">
    <source>
        <dbReference type="SAM" id="MobiDB-lite"/>
    </source>
</evidence>
<evidence type="ECO:0000269" key="3">
    <source>
    </source>
</evidence>
<evidence type="ECO:0000269" key="4">
    <source>
    </source>
</evidence>
<evidence type="ECO:0000269" key="5">
    <source>
    </source>
</evidence>
<evidence type="ECO:0000269" key="6">
    <source>
    </source>
</evidence>
<evidence type="ECO:0000269" key="7">
    <source>
    </source>
</evidence>
<evidence type="ECO:0000303" key="8">
    <source>
    </source>
</evidence>
<evidence type="ECO:0000303" key="9">
    <source>
    </source>
</evidence>
<evidence type="ECO:0000305" key="10"/>
<evidence type="ECO:0007744" key="11">
    <source>
    </source>
</evidence>
<evidence type="ECO:0007744" key="12">
    <source>
    </source>
</evidence>
<evidence type="ECO:0007744" key="13">
    <source>
    </source>
</evidence>
<comment type="function">
    <text>Ribosomal protein P0 is the functional equivalent of E.coli protein L10.</text>
</comment>
<comment type="subunit">
    <text evidence="3 4 5 6">P0 forms a pentameric complex by interaction with dimers of P1 and P2 (PubMed:3323886). Identified in a IGF2BP1-dependent mRNP granule complex containing untranslated mRNAs (PubMed:17289661). Interacts with APEX1 (PubMed:19188445). Interacts with FMR1 isoform 6 (PubMed:24658146).</text>
</comment>
<comment type="interaction">
    <interactant intactId="EBI-354101">
        <id>P05388</id>
    </interactant>
    <interactant intactId="EBI-748961">
        <id>O95273</id>
        <label>CCNDBP1</label>
    </interactant>
    <organismsDiffer>false</organismsDiffer>
    <experiments>7</experiments>
</comment>
<comment type="interaction">
    <interactant intactId="EBI-354101">
        <id>P05388</id>
    </interactant>
    <interactant intactId="EBI-358174">
        <id>O95793</id>
        <label>STAU1</label>
    </interactant>
    <organismsDiffer>false</organismsDiffer>
    <experiments>6</experiments>
</comment>
<comment type="subcellular location">
    <subcellularLocation>
        <location evidence="4">Nucleus</location>
    </subcellularLocation>
    <subcellularLocation>
        <location evidence="4">Cytoplasm</location>
    </subcellularLocation>
    <text evidence="3 4">Localized in cytoplasmic mRNP granules containing untranslated mRNAs (PubMed:17289661, PubMed:19188445).</text>
</comment>
<comment type="alternative products">
    <event type="alternative splicing"/>
    <isoform>
        <id>P05388-1</id>
        <name>1</name>
        <sequence type="displayed"/>
    </isoform>
    <isoform>
        <id>P05388-2</id>
        <name>2</name>
        <sequence type="described" ref="VSP_055867"/>
    </isoform>
</comment>
<comment type="PTM">
    <text evidence="7">Ubiquitinated at Lys-264 by RNF14 and RNF25 in response to ribosome collisions (ribosome stalling).</text>
</comment>
<comment type="similarity">
    <text evidence="10">Belongs to the universal ribosomal protein uL10 family.</text>
</comment>
<keyword id="KW-0002">3D-structure</keyword>
<keyword id="KW-0025">Alternative splicing</keyword>
<keyword id="KW-0963">Cytoplasm</keyword>
<keyword id="KW-0903">Direct protein sequencing</keyword>
<keyword id="KW-1017">Isopeptide bond</keyword>
<keyword id="KW-0539">Nucleus</keyword>
<keyword id="KW-0597">Phosphoprotein</keyword>
<keyword id="KW-1267">Proteomics identification</keyword>
<keyword id="KW-1185">Reference proteome</keyword>
<keyword id="KW-0687">Ribonucleoprotein</keyword>
<keyword id="KW-0689">Ribosomal protein</keyword>
<keyword id="KW-0832">Ubl conjugation</keyword>
<name>RLA0_HUMAN</name>
<protein>
    <recommendedName>
        <fullName evidence="9">Large ribosomal subunit protein uL10</fullName>
    </recommendedName>
    <alternativeName>
        <fullName>60S acidic ribosomal protein P0</fullName>
    </alternativeName>
    <alternativeName>
        <fullName>60S ribosomal protein L10E</fullName>
    </alternativeName>
</protein>
<accession>P05388</accession>
<accession>Q3B7A4</accession>
<accession>Q9BVK4</accession>
<gene>
    <name type="primary">RPLP0</name>
</gene>
<organism>
    <name type="scientific">Homo sapiens</name>
    <name type="common">Human</name>
    <dbReference type="NCBI Taxonomy" id="9606"/>
    <lineage>
        <taxon>Eukaryota</taxon>
        <taxon>Metazoa</taxon>
        <taxon>Chordata</taxon>
        <taxon>Craniata</taxon>
        <taxon>Vertebrata</taxon>
        <taxon>Euteleostomi</taxon>
        <taxon>Mammalia</taxon>
        <taxon>Eutheria</taxon>
        <taxon>Euarchontoglires</taxon>
        <taxon>Primates</taxon>
        <taxon>Haplorrhini</taxon>
        <taxon>Catarrhini</taxon>
        <taxon>Hominidae</taxon>
        <taxon>Homo</taxon>
    </lineage>
</organism>